<accession>P10157</accession>
<name>ETS2_CHICK</name>
<reference key="1">
    <citation type="journal article" date="1988" name="EMBO J.">
        <title>Identification in chickens of an evolutionarily conserved cellular ets-2 gene (c-ets-2) encoding nuclear proteins related to the products of the c-ets proto-oncogene.</title>
        <authorList>
            <person name="Boulukos K.E."/>
            <person name="Pognonec P."/>
            <person name="Begue A."/>
            <person name="Galibert F."/>
            <person name="Gesquiere J.C."/>
            <person name="Stehelin D."/>
            <person name="Ghysdael J."/>
        </authorList>
    </citation>
    <scope>NUCLEOTIDE SEQUENCE [MRNA]</scope>
    <source>
        <tissue>Fibroblast</tissue>
    </source>
</reference>
<comment type="function">
    <text evidence="1">Probable transcription factor.</text>
</comment>
<comment type="subcellular location">
    <subcellularLocation>
        <location>Nucleus</location>
    </subcellularLocation>
</comment>
<comment type="similarity">
    <text evidence="4">Belongs to the ETS family.</text>
</comment>
<evidence type="ECO:0000250" key="1"/>
<evidence type="ECO:0000255" key="2">
    <source>
        <dbReference type="PROSITE-ProRule" id="PRU00237"/>
    </source>
</evidence>
<evidence type="ECO:0000255" key="3">
    <source>
        <dbReference type="PROSITE-ProRule" id="PRU00762"/>
    </source>
</evidence>
<evidence type="ECO:0000305" key="4"/>
<gene>
    <name type="primary">ETS2</name>
</gene>
<keyword id="KW-0238">DNA-binding</keyword>
<keyword id="KW-0539">Nucleus</keyword>
<keyword id="KW-0656">Proto-oncogene</keyword>
<keyword id="KW-1185">Reference proteome</keyword>
<keyword id="KW-0804">Transcription</keyword>
<keyword id="KW-0805">Transcription regulation</keyword>
<protein>
    <recommendedName>
        <fullName>Protein C-ets-2</fullName>
    </recommendedName>
</protein>
<dbReference type="EMBL" id="X07202">
    <property type="protein sequence ID" value="CAA30178.1"/>
    <property type="molecule type" value="mRNA"/>
</dbReference>
<dbReference type="PIR" id="S00386">
    <property type="entry name" value="TVCHE2"/>
</dbReference>
<dbReference type="RefSeq" id="NP_990643.1">
    <property type="nucleotide sequence ID" value="NM_205312.2"/>
</dbReference>
<dbReference type="RefSeq" id="XP_040522215.1">
    <property type="nucleotide sequence ID" value="XM_040666281.2"/>
</dbReference>
<dbReference type="RefSeq" id="XP_046762853.1">
    <property type="nucleotide sequence ID" value="XM_046906897.1"/>
</dbReference>
<dbReference type="RefSeq" id="XP_046762854.1">
    <property type="nucleotide sequence ID" value="XM_046906898.1"/>
</dbReference>
<dbReference type="RefSeq" id="XP_046776396.1">
    <property type="nucleotide sequence ID" value="XM_046920440.1"/>
</dbReference>
<dbReference type="SMR" id="P10157"/>
<dbReference type="FunCoup" id="P10157">
    <property type="interactions" value="502"/>
</dbReference>
<dbReference type="STRING" id="9031.ENSGALP00000066822"/>
<dbReference type="PaxDb" id="9031-ENSGALP00000025826"/>
<dbReference type="Ensembl" id="ENSGALT00010032138.1">
    <property type="protein sequence ID" value="ENSGALP00010018928.1"/>
    <property type="gene ID" value="ENSGALG00010013349.1"/>
</dbReference>
<dbReference type="GeneID" id="396250"/>
<dbReference type="KEGG" id="gga:396250"/>
<dbReference type="CTD" id="2114"/>
<dbReference type="VEuPathDB" id="HostDB:geneid_396250"/>
<dbReference type="eggNOG" id="KOG3806">
    <property type="taxonomic scope" value="Eukaryota"/>
</dbReference>
<dbReference type="GeneTree" id="ENSGT00940000160202"/>
<dbReference type="HOGENOM" id="CLU_031197_1_1_1"/>
<dbReference type="InParanoid" id="P10157"/>
<dbReference type="OMA" id="DFGIRNM"/>
<dbReference type="OrthoDB" id="10067219at2759"/>
<dbReference type="PhylomeDB" id="P10157"/>
<dbReference type="PRO" id="PR:P10157"/>
<dbReference type="Proteomes" id="UP000000539">
    <property type="component" value="Chromosome 1"/>
</dbReference>
<dbReference type="Bgee" id="ENSGALG00000016059">
    <property type="expression patterns" value="Expressed in spermatocyte and 13 other cell types or tissues"/>
</dbReference>
<dbReference type="GO" id="GO:0005829">
    <property type="term" value="C:cytosol"/>
    <property type="evidence" value="ECO:0007669"/>
    <property type="project" value="Ensembl"/>
</dbReference>
<dbReference type="GO" id="GO:0005654">
    <property type="term" value="C:nucleoplasm"/>
    <property type="evidence" value="ECO:0007669"/>
    <property type="project" value="Ensembl"/>
</dbReference>
<dbReference type="GO" id="GO:0005634">
    <property type="term" value="C:nucleus"/>
    <property type="evidence" value="ECO:0000318"/>
    <property type="project" value="GO_Central"/>
</dbReference>
<dbReference type="GO" id="GO:0005886">
    <property type="term" value="C:plasma membrane"/>
    <property type="evidence" value="ECO:0007669"/>
    <property type="project" value="Ensembl"/>
</dbReference>
<dbReference type="GO" id="GO:0000981">
    <property type="term" value="F:DNA-binding transcription factor activity, RNA polymerase II-specific"/>
    <property type="evidence" value="ECO:0000318"/>
    <property type="project" value="GO_Central"/>
</dbReference>
<dbReference type="GO" id="GO:0001227">
    <property type="term" value="F:DNA-binding transcription repressor activity, RNA polymerase II-specific"/>
    <property type="evidence" value="ECO:0007669"/>
    <property type="project" value="Ensembl"/>
</dbReference>
<dbReference type="GO" id="GO:0019904">
    <property type="term" value="F:protein domain specific binding"/>
    <property type="evidence" value="ECO:0007669"/>
    <property type="project" value="Ensembl"/>
</dbReference>
<dbReference type="GO" id="GO:0000978">
    <property type="term" value="F:RNA polymerase II cis-regulatory region sequence-specific DNA binding"/>
    <property type="evidence" value="ECO:0007669"/>
    <property type="project" value="Ensembl"/>
</dbReference>
<dbReference type="GO" id="GO:0061629">
    <property type="term" value="F:RNA polymerase II-specific DNA-binding transcription factor binding"/>
    <property type="evidence" value="ECO:0007669"/>
    <property type="project" value="Ensembl"/>
</dbReference>
<dbReference type="GO" id="GO:0001569">
    <property type="term" value="P:branching involved in blood vessel morphogenesis"/>
    <property type="evidence" value="ECO:0000304"/>
    <property type="project" value="DFLAT"/>
</dbReference>
<dbReference type="GO" id="GO:0030154">
    <property type="term" value="P:cell differentiation"/>
    <property type="evidence" value="ECO:0000318"/>
    <property type="project" value="GO_Central"/>
</dbReference>
<dbReference type="GO" id="GO:0060982">
    <property type="term" value="P:coronary artery morphogenesis"/>
    <property type="evidence" value="ECO:0000304"/>
    <property type="project" value="DFLAT"/>
</dbReference>
<dbReference type="GO" id="GO:0001712">
    <property type="term" value="P:ectodermal cell fate commitment"/>
    <property type="evidence" value="ECO:0007669"/>
    <property type="project" value="Ensembl"/>
</dbReference>
<dbReference type="GO" id="GO:0007498">
    <property type="term" value="P:mesoderm development"/>
    <property type="evidence" value="ECO:0007669"/>
    <property type="project" value="Ensembl"/>
</dbReference>
<dbReference type="GO" id="GO:0045944">
    <property type="term" value="P:positive regulation of transcription by RNA polymerase II"/>
    <property type="evidence" value="ECO:0007669"/>
    <property type="project" value="Ensembl"/>
</dbReference>
<dbReference type="GO" id="GO:0090009">
    <property type="term" value="P:primitive streak formation"/>
    <property type="evidence" value="ECO:0007669"/>
    <property type="project" value="Ensembl"/>
</dbReference>
<dbReference type="GO" id="GO:0006357">
    <property type="term" value="P:regulation of transcription by RNA polymerase II"/>
    <property type="evidence" value="ECO:0000318"/>
    <property type="project" value="GO_Central"/>
</dbReference>
<dbReference type="CDD" id="cd08543">
    <property type="entry name" value="SAM_PNT-ETS-2"/>
    <property type="match status" value="1"/>
</dbReference>
<dbReference type="FunFam" id="1.10.10.10:FF:000097">
    <property type="entry name" value="Protein c-ets-1 isoform 1"/>
    <property type="match status" value="1"/>
</dbReference>
<dbReference type="FunFam" id="1.10.150.50:FF:000014">
    <property type="entry name" value="Protein c-ets-1 isoform 1"/>
    <property type="match status" value="1"/>
</dbReference>
<dbReference type="Gene3D" id="1.10.150.50">
    <property type="entry name" value="Transcription Factor, Ets-1"/>
    <property type="match status" value="1"/>
</dbReference>
<dbReference type="Gene3D" id="1.10.10.10">
    <property type="entry name" value="Winged helix-like DNA-binding domain superfamily/Winged helix DNA-binding domain"/>
    <property type="match status" value="1"/>
</dbReference>
<dbReference type="InterPro" id="IPR045688">
    <property type="entry name" value="Ets1_N_flank"/>
</dbReference>
<dbReference type="InterPro" id="IPR000418">
    <property type="entry name" value="Ets_dom"/>
</dbReference>
<dbReference type="InterPro" id="IPR046328">
    <property type="entry name" value="ETS_fam"/>
</dbReference>
<dbReference type="InterPro" id="IPR003118">
    <property type="entry name" value="Pointed_dom"/>
</dbReference>
<dbReference type="InterPro" id="IPR013761">
    <property type="entry name" value="SAM/pointed_sf"/>
</dbReference>
<dbReference type="InterPro" id="IPR016311">
    <property type="entry name" value="Transform_prot_C-ets"/>
</dbReference>
<dbReference type="InterPro" id="IPR027276">
    <property type="entry name" value="Transform_prot_C-ets-2"/>
</dbReference>
<dbReference type="InterPro" id="IPR036388">
    <property type="entry name" value="WH-like_DNA-bd_sf"/>
</dbReference>
<dbReference type="InterPro" id="IPR036390">
    <property type="entry name" value="WH_DNA-bd_sf"/>
</dbReference>
<dbReference type="PANTHER" id="PTHR11849">
    <property type="entry name" value="ETS"/>
    <property type="match status" value="1"/>
</dbReference>
<dbReference type="PANTHER" id="PTHR11849:SF188">
    <property type="entry name" value="PROTEIN C-ETS-2"/>
    <property type="match status" value="1"/>
</dbReference>
<dbReference type="Pfam" id="PF00178">
    <property type="entry name" value="Ets"/>
    <property type="match status" value="1"/>
</dbReference>
<dbReference type="Pfam" id="PF19525">
    <property type="entry name" value="Ets1_N_flank"/>
    <property type="match status" value="1"/>
</dbReference>
<dbReference type="Pfam" id="PF02198">
    <property type="entry name" value="SAM_PNT"/>
    <property type="match status" value="1"/>
</dbReference>
<dbReference type="PIRSF" id="PIRSF501032">
    <property type="entry name" value="C-ets-2"/>
    <property type="match status" value="1"/>
</dbReference>
<dbReference type="PIRSF" id="PIRSF001698">
    <property type="entry name" value="Transforming_factor_C-ets"/>
    <property type="match status" value="1"/>
</dbReference>
<dbReference type="PRINTS" id="PR00454">
    <property type="entry name" value="ETSDOMAIN"/>
</dbReference>
<dbReference type="SMART" id="SM00413">
    <property type="entry name" value="ETS"/>
    <property type="match status" value="1"/>
</dbReference>
<dbReference type="SMART" id="SM00251">
    <property type="entry name" value="SAM_PNT"/>
    <property type="match status" value="1"/>
</dbReference>
<dbReference type="SUPFAM" id="SSF47769">
    <property type="entry name" value="SAM/Pointed domain"/>
    <property type="match status" value="1"/>
</dbReference>
<dbReference type="SUPFAM" id="SSF46785">
    <property type="entry name" value="Winged helix' DNA-binding domain"/>
    <property type="match status" value="1"/>
</dbReference>
<dbReference type="PROSITE" id="PS00345">
    <property type="entry name" value="ETS_DOMAIN_1"/>
    <property type="match status" value="1"/>
</dbReference>
<dbReference type="PROSITE" id="PS00346">
    <property type="entry name" value="ETS_DOMAIN_2"/>
    <property type="match status" value="1"/>
</dbReference>
<dbReference type="PROSITE" id="PS50061">
    <property type="entry name" value="ETS_DOMAIN_3"/>
    <property type="match status" value="1"/>
</dbReference>
<dbReference type="PROSITE" id="PS51433">
    <property type="entry name" value="PNT"/>
    <property type="match status" value="1"/>
</dbReference>
<feature type="chain" id="PRO_0000204076" description="Protein C-ets-2">
    <location>
        <begin position="1"/>
        <end position="479"/>
    </location>
</feature>
<feature type="domain" description="PNT" evidence="3">
    <location>
        <begin position="88"/>
        <end position="173"/>
    </location>
</feature>
<feature type="DNA-binding region" description="ETS" evidence="2">
    <location>
        <begin position="373"/>
        <end position="453"/>
    </location>
</feature>
<proteinExistence type="evidence at transcript level"/>
<sequence>MSEFAIRNMDQVAPVSNMYRGMLKRQPAFDTFDSSNSLFAGYFLSLNEDQTLQEVPTGFDSTSYESNNCELPLLTPCSKAVMSQALKDTFSGFTKEQCRLGIPNNPWLWTEQHVCQWLAWATNEFSLANVNIHQFLMSGQDLCNLGKERFLELAPDYVGDILWEHLEQMIKDSQEKTQDQYVESSHLTSVPHWVNNNSLTVNVDQTPYGIQMPGYPKALSYPKPNLLSDICQTSTGPNLLSPEQDFSLFPKTQVDAVSVNYCTVNQDFTRSNLNLLIDNSGKLREHESSESGAESYESSDSMLQSWNSQSSLVDLQRVPSYESFEDDCSQSLCMSKPTMSFKDYIQDRSDPVEQGKPVIPAAILAGFTGSGPIQLWQFLLELLTDKSCQSFISWTGDGWEFKLADPDEVARRWGRRKNKPKMNYEKLSRGLRYYYDKNIIHKTSGKRYVYRFVCDLQNLLGYTAEELHAMLGVQPDTED</sequence>
<organism>
    <name type="scientific">Gallus gallus</name>
    <name type="common">Chicken</name>
    <dbReference type="NCBI Taxonomy" id="9031"/>
    <lineage>
        <taxon>Eukaryota</taxon>
        <taxon>Metazoa</taxon>
        <taxon>Chordata</taxon>
        <taxon>Craniata</taxon>
        <taxon>Vertebrata</taxon>
        <taxon>Euteleostomi</taxon>
        <taxon>Archelosauria</taxon>
        <taxon>Archosauria</taxon>
        <taxon>Dinosauria</taxon>
        <taxon>Saurischia</taxon>
        <taxon>Theropoda</taxon>
        <taxon>Coelurosauria</taxon>
        <taxon>Aves</taxon>
        <taxon>Neognathae</taxon>
        <taxon>Galloanserae</taxon>
        <taxon>Galliformes</taxon>
        <taxon>Phasianidae</taxon>
        <taxon>Phasianinae</taxon>
        <taxon>Gallus</taxon>
    </lineage>
</organism>